<sequence length="610" mass="68202">MSDQFDAKAFLKTVTSQPGVYRMYDAGGTVIYVGKAKDLKKRLSSYFRSNLASRKTEALVAQIQQIDVTVTHTETEALLLEHNYIKLYQPRYNVLLRDDKSYPFIFLSGDTHPRLAMHRGAKHAKGEYFGPFPNGYAVRETLALLQKIFPIRQCENSVYRNRSRPCLQYQIGRCLGPCVEGLVSEEEYAQQVEYVRLFLSGKDDQVLTQLISRMETASQNLEFEEAARIRDQIQAVRRVTEKQFVSNTGDDLDVIGVAFDAGMACVHVLFIRQGKVLGSRSYFPKVPGGTELSEVVETFVGQFYLQGSQMRTLPGEILLDFNLSDKTLLADSLSELAGRKINVQTKPRGDRARYLKLARTNAATALTSKLSQQSTVHQRLTALASVLKLPEVKRMECFDISHTMGEQTVASCVVFDANGPLRAEYRRYNITGITPGDDYAAMNQVLRRRYGKAIDDSKIPDVILIDGGKGQLAQAKNVFAELDVSWDKNHPLLLGVAKGADRKAGLETLFFEPEGEGFSLPPDSPALHVIQHIRDESHDHAIGGHRKKRAKVKNTSSLETIEGIGPKRRQMLLKYMGGLQGLRNASVEEIAKVPGISQGLAEKIFWSLKH</sequence>
<accession>Q1RAM7</accession>
<organism>
    <name type="scientific">Escherichia coli (strain UTI89 / UPEC)</name>
    <dbReference type="NCBI Taxonomy" id="364106"/>
    <lineage>
        <taxon>Bacteria</taxon>
        <taxon>Pseudomonadati</taxon>
        <taxon>Pseudomonadota</taxon>
        <taxon>Gammaproteobacteria</taxon>
        <taxon>Enterobacterales</taxon>
        <taxon>Enterobacteriaceae</taxon>
        <taxon>Escherichia</taxon>
    </lineage>
</organism>
<gene>
    <name evidence="1" type="primary">uvrC</name>
    <name type="ordered locus">UTI89_C2114</name>
</gene>
<comment type="function">
    <text evidence="1">The UvrABC repair system catalyzes the recognition and processing of DNA lesions. UvrC both incises the 5' and 3' sides of the lesion. The N-terminal half is responsible for the 3' incision and the C-terminal half is responsible for the 5' incision.</text>
</comment>
<comment type="subunit">
    <text evidence="1">Interacts with UvrB in an incision complex.</text>
</comment>
<comment type="subcellular location">
    <subcellularLocation>
        <location evidence="1">Cytoplasm</location>
    </subcellularLocation>
</comment>
<comment type="similarity">
    <text evidence="1">Belongs to the UvrC family.</text>
</comment>
<name>UVRC_ECOUT</name>
<reference key="1">
    <citation type="journal article" date="2006" name="Proc. Natl. Acad. Sci. U.S.A.">
        <title>Identification of genes subject to positive selection in uropathogenic strains of Escherichia coli: a comparative genomics approach.</title>
        <authorList>
            <person name="Chen S.L."/>
            <person name="Hung C.-S."/>
            <person name="Xu J."/>
            <person name="Reigstad C.S."/>
            <person name="Magrini V."/>
            <person name="Sabo A."/>
            <person name="Blasiar D."/>
            <person name="Bieri T."/>
            <person name="Meyer R.R."/>
            <person name="Ozersky P."/>
            <person name="Armstrong J.R."/>
            <person name="Fulton R.S."/>
            <person name="Latreille J.P."/>
            <person name="Spieth J."/>
            <person name="Hooton T.M."/>
            <person name="Mardis E.R."/>
            <person name="Hultgren S.J."/>
            <person name="Gordon J.I."/>
        </authorList>
    </citation>
    <scope>NUCLEOTIDE SEQUENCE [LARGE SCALE GENOMIC DNA]</scope>
    <source>
        <strain>UTI89 / UPEC</strain>
    </source>
</reference>
<evidence type="ECO:0000255" key="1">
    <source>
        <dbReference type="HAMAP-Rule" id="MF_00203"/>
    </source>
</evidence>
<dbReference type="EMBL" id="CP000243">
    <property type="protein sequence ID" value="ABE07587.1"/>
    <property type="molecule type" value="Genomic_DNA"/>
</dbReference>
<dbReference type="RefSeq" id="WP_001283418.1">
    <property type="nucleotide sequence ID" value="NZ_CP064825.1"/>
</dbReference>
<dbReference type="SMR" id="Q1RAM7"/>
<dbReference type="KEGG" id="eci:UTI89_C2114"/>
<dbReference type="HOGENOM" id="CLU_014841_3_0_6"/>
<dbReference type="Proteomes" id="UP000001952">
    <property type="component" value="Chromosome"/>
</dbReference>
<dbReference type="GO" id="GO:0005737">
    <property type="term" value="C:cytoplasm"/>
    <property type="evidence" value="ECO:0007669"/>
    <property type="project" value="UniProtKB-SubCell"/>
</dbReference>
<dbReference type="GO" id="GO:0009380">
    <property type="term" value="C:excinuclease repair complex"/>
    <property type="evidence" value="ECO:0007669"/>
    <property type="project" value="InterPro"/>
</dbReference>
<dbReference type="GO" id="GO:0003677">
    <property type="term" value="F:DNA binding"/>
    <property type="evidence" value="ECO:0007669"/>
    <property type="project" value="UniProtKB-UniRule"/>
</dbReference>
<dbReference type="GO" id="GO:0009381">
    <property type="term" value="F:excinuclease ABC activity"/>
    <property type="evidence" value="ECO:0007669"/>
    <property type="project" value="UniProtKB-UniRule"/>
</dbReference>
<dbReference type="GO" id="GO:0006289">
    <property type="term" value="P:nucleotide-excision repair"/>
    <property type="evidence" value="ECO:0007669"/>
    <property type="project" value="UniProtKB-UniRule"/>
</dbReference>
<dbReference type="GO" id="GO:0009432">
    <property type="term" value="P:SOS response"/>
    <property type="evidence" value="ECO:0007669"/>
    <property type="project" value="UniProtKB-UniRule"/>
</dbReference>
<dbReference type="CDD" id="cd10434">
    <property type="entry name" value="GIY-YIG_UvrC_Cho"/>
    <property type="match status" value="1"/>
</dbReference>
<dbReference type="FunFam" id="1.10.150.20:FF:000005">
    <property type="entry name" value="UvrABC system protein C"/>
    <property type="match status" value="1"/>
</dbReference>
<dbReference type="FunFam" id="3.30.420.340:FF:000001">
    <property type="entry name" value="UvrABC system protein C"/>
    <property type="match status" value="1"/>
</dbReference>
<dbReference type="FunFam" id="3.40.1440.10:FF:000001">
    <property type="entry name" value="UvrABC system protein C"/>
    <property type="match status" value="1"/>
</dbReference>
<dbReference type="FunFam" id="4.10.860.10:FF:000002">
    <property type="entry name" value="UvrABC system protein C"/>
    <property type="match status" value="1"/>
</dbReference>
<dbReference type="Gene3D" id="1.10.150.20">
    <property type="entry name" value="5' to 3' exonuclease, C-terminal subdomain"/>
    <property type="match status" value="1"/>
</dbReference>
<dbReference type="Gene3D" id="3.40.1440.10">
    <property type="entry name" value="GIY-YIG endonuclease"/>
    <property type="match status" value="1"/>
</dbReference>
<dbReference type="Gene3D" id="4.10.860.10">
    <property type="entry name" value="UVR domain"/>
    <property type="match status" value="1"/>
</dbReference>
<dbReference type="Gene3D" id="3.30.420.340">
    <property type="entry name" value="UvrC, RNAse H endonuclease domain"/>
    <property type="match status" value="1"/>
</dbReference>
<dbReference type="HAMAP" id="MF_00203">
    <property type="entry name" value="UvrC"/>
    <property type="match status" value="1"/>
</dbReference>
<dbReference type="InterPro" id="IPR000305">
    <property type="entry name" value="GIY-YIG_endonuc"/>
</dbReference>
<dbReference type="InterPro" id="IPR035901">
    <property type="entry name" value="GIY-YIG_endonuc_sf"/>
</dbReference>
<dbReference type="InterPro" id="IPR047296">
    <property type="entry name" value="GIY-YIG_UvrC_Cho"/>
</dbReference>
<dbReference type="InterPro" id="IPR003583">
    <property type="entry name" value="Hlx-hairpin-Hlx_DNA-bd_motif"/>
</dbReference>
<dbReference type="InterPro" id="IPR010994">
    <property type="entry name" value="RuvA_2-like"/>
</dbReference>
<dbReference type="InterPro" id="IPR001943">
    <property type="entry name" value="UVR_dom"/>
</dbReference>
<dbReference type="InterPro" id="IPR036876">
    <property type="entry name" value="UVR_dom_sf"/>
</dbReference>
<dbReference type="InterPro" id="IPR050066">
    <property type="entry name" value="UvrABC_protein_C"/>
</dbReference>
<dbReference type="InterPro" id="IPR004791">
    <property type="entry name" value="UvrC"/>
</dbReference>
<dbReference type="InterPro" id="IPR001162">
    <property type="entry name" value="UvrC_RNase_H_dom"/>
</dbReference>
<dbReference type="InterPro" id="IPR038476">
    <property type="entry name" value="UvrC_RNase_H_dom_sf"/>
</dbReference>
<dbReference type="NCBIfam" id="NF001824">
    <property type="entry name" value="PRK00558.1-5"/>
    <property type="match status" value="1"/>
</dbReference>
<dbReference type="NCBIfam" id="TIGR00194">
    <property type="entry name" value="uvrC"/>
    <property type="match status" value="1"/>
</dbReference>
<dbReference type="PANTHER" id="PTHR30562:SF1">
    <property type="entry name" value="UVRABC SYSTEM PROTEIN C"/>
    <property type="match status" value="1"/>
</dbReference>
<dbReference type="PANTHER" id="PTHR30562">
    <property type="entry name" value="UVRC/OXIDOREDUCTASE"/>
    <property type="match status" value="1"/>
</dbReference>
<dbReference type="Pfam" id="PF01541">
    <property type="entry name" value="GIY-YIG"/>
    <property type="match status" value="1"/>
</dbReference>
<dbReference type="Pfam" id="PF14520">
    <property type="entry name" value="HHH_5"/>
    <property type="match status" value="1"/>
</dbReference>
<dbReference type="Pfam" id="PF02151">
    <property type="entry name" value="UVR"/>
    <property type="match status" value="1"/>
</dbReference>
<dbReference type="Pfam" id="PF22920">
    <property type="entry name" value="UvrC_RNaseH"/>
    <property type="match status" value="1"/>
</dbReference>
<dbReference type="Pfam" id="PF08459">
    <property type="entry name" value="UvrC_RNaseH_dom"/>
    <property type="match status" value="1"/>
</dbReference>
<dbReference type="SMART" id="SM00465">
    <property type="entry name" value="GIYc"/>
    <property type="match status" value="1"/>
</dbReference>
<dbReference type="SMART" id="SM00278">
    <property type="entry name" value="HhH1"/>
    <property type="match status" value="2"/>
</dbReference>
<dbReference type="SUPFAM" id="SSF46600">
    <property type="entry name" value="C-terminal UvrC-binding domain of UvrB"/>
    <property type="match status" value="1"/>
</dbReference>
<dbReference type="SUPFAM" id="SSF82771">
    <property type="entry name" value="GIY-YIG endonuclease"/>
    <property type="match status" value="1"/>
</dbReference>
<dbReference type="SUPFAM" id="SSF47781">
    <property type="entry name" value="RuvA domain 2-like"/>
    <property type="match status" value="1"/>
</dbReference>
<dbReference type="PROSITE" id="PS50164">
    <property type="entry name" value="GIY_YIG"/>
    <property type="match status" value="1"/>
</dbReference>
<dbReference type="PROSITE" id="PS50151">
    <property type="entry name" value="UVR"/>
    <property type="match status" value="1"/>
</dbReference>
<dbReference type="PROSITE" id="PS50165">
    <property type="entry name" value="UVRC"/>
    <property type="match status" value="1"/>
</dbReference>
<protein>
    <recommendedName>
        <fullName evidence="1">UvrABC system protein C</fullName>
        <shortName evidence="1">Protein UvrC</shortName>
    </recommendedName>
    <alternativeName>
        <fullName evidence="1">Excinuclease ABC subunit C</fullName>
    </alternativeName>
</protein>
<proteinExistence type="inferred from homology"/>
<keyword id="KW-0963">Cytoplasm</keyword>
<keyword id="KW-0227">DNA damage</keyword>
<keyword id="KW-0228">DNA excision</keyword>
<keyword id="KW-0234">DNA repair</keyword>
<keyword id="KW-0267">Excision nuclease</keyword>
<keyword id="KW-0742">SOS response</keyword>
<feature type="chain" id="PRO_0000264891" description="UvrABC system protein C">
    <location>
        <begin position="1"/>
        <end position="610"/>
    </location>
</feature>
<feature type="domain" description="GIY-YIG" evidence="1">
    <location>
        <begin position="16"/>
        <end position="94"/>
    </location>
</feature>
<feature type="domain" description="UVR" evidence="1">
    <location>
        <begin position="204"/>
        <end position="239"/>
    </location>
</feature>